<sequence>MPQFPWKDNDAELSPLEAFLAEWDDPEAEEEDFRNDFFRGSEGRRKKAAVMLMAIWTVVITLHYWVWGSWLVWALTGALSLQALRLMKATPEEAPPLLTGDASTVPYPQVCLMVAAKNEEAVIGKIVQQLCSLDYPGDRHEVWIVDDNSTDRTPAILDQLRQQYPQLKVVRRGAGASGGKSGALNEVLAQTQGDIVGVFDADANVPKDLLRRVVPYFASPTFGALQVRKAIANEAVNFWTRGQGAEMALDAYFQQQRIVTGGIGELRGNGQFVARQALDAVGGWNEQTITDDLDLTIRLHLHQWKVGILVNPPVEEEGVTTAIALWHQRNRWAEGGYQRYLDYWRWICTQPMGWKKKLDLFSFLLMQYLLPTAAVPDLLMALWQRRFPLLTPLSYLAIGFSCWGMYYGLKRLTPSEGESPWQQMPALLARTIGGTIYMFHWLIIMPAVTARMAFRPKRLKWVKTVHGAATEDALELKQS</sequence>
<name>BMGDS_SYNY3</name>
<reference key="1">
    <citation type="journal article" date="1996" name="DNA Res.">
        <title>Sequence analysis of the genome of the unicellular cyanobacterium Synechocystis sp. strain PCC6803. II. Sequence determination of the entire genome and assignment of potential protein-coding regions.</title>
        <authorList>
            <person name="Kaneko T."/>
            <person name="Sato S."/>
            <person name="Kotani H."/>
            <person name="Tanaka A."/>
            <person name="Asamizu E."/>
            <person name="Nakamura Y."/>
            <person name="Miyajima N."/>
            <person name="Hirosawa M."/>
            <person name="Sugiura M."/>
            <person name="Sasamoto S."/>
            <person name="Kimura T."/>
            <person name="Hosouchi T."/>
            <person name="Matsuno A."/>
            <person name="Muraki A."/>
            <person name="Nakazaki N."/>
            <person name="Naruo K."/>
            <person name="Okumura S."/>
            <person name="Shimpo S."/>
            <person name="Takeuchi C."/>
            <person name="Wada T."/>
            <person name="Watanabe A."/>
            <person name="Yamada M."/>
            <person name="Yasuda M."/>
            <person name="Tabata S."/>
        </authorList>
    </citation>
    <scope>NUCLEOTIDE SEQUENCE [LARGE SCALE GENOMIC DNA]</scope>
    <source>
        <strain>ATCC 27184 / PCC 6803 / Kazusa</strain>
    </source>
</reference>
<reference key="2">
    <citation type="journal article" date="2006" name="Plant Physiol.">
        <title>Comparative genomic analysis revealed a gene for monoglucosyldiacylglycerol synthase, an enzyme for photosynthetic membrane lipid synthesis in cyanobacteria.</title>
        <authorList>
            <person name="Awai K."/>
            <person name="Kakimoto T."/>
            <person name="Awai C."/>
            <person name="Kaneko T."/>
            <person name="Nakamura Y."/>
            <person name="Takamiya K."/>
            <person name="Wada H."/>
            <person name="Ohta H."/>
        </authorList>
    </citation>
    <scope>FUNCTION</scope>
    <scope>CATALYTIC ACTIVITY</scope>
    <scope>SUBSTRATE SPECIFICITY</scope>
    <scope>COFACTOR</scope>
    <source>
        <strain>ATCC 27184 / PCC 6803 / N-1</strain>
    </source>
</reference>
<reference key="3">
    <citation type="journal article" date="2009" name="FEBS Lett.">
        <title>Temperature-dependent hyper-activation of monoglucosyldiacylglycerol synthase is post-translationally regulated in Synechocystis sp. PCC 6803.</title>
        <authorList>
            <person name="Shimojima M."/>
            <person name="Tsuchiya M."/>
            <person name="Ohta H."/>
        </authorList>
    </citation>
    <scope>FUNCTION</scope>
    <scope>MUTAGENESIS OF ASP-147; ASP-200; ARG-329 AND ARG-331</scope>
    <scope>BIOPHYSICOCHEMICAL PROPERTIES</scope>
    <scope>SUBCELLULAR LOCATION</scope>
    <source>
        <strain>ATCC 27184 / PCC 6803 / N-1</strain>
    </source>
</reference>
<accession>P74165</accession>
<feature type="chain" id="PRO_0000425268" description="Beta-monoglucosyldiacylglycerol synthase">
    <location>
        <begin position="1"/>
        <end position="479"/>
    </location>
</feature>
<feature type="transmembrane region" description="Helical" evidence="1">
    <location>
        <begin position="48"/>
        <end position="68"/>
    </location>
</feature>
<feature type="transmembrane region" description="Helical" evidence="1">
    <location>
        <begin position="363"/>
        <end position="383"/>
    </location>
</feature>
<feature type="transmembrane region" description="Helical" evidence="1">
    <location>
        <begin position="389"/>
        <end position="409"/>
    </location>
</feature>
<feature type="transmembrane region" description="Helical" evidence="1">
    <location>
        <begin position="428"/>
        <end position="448"/>
    </location>
</feature>
<feature type="mutagenesis site" description="Significantly reduces the monoglucosyldiacylglycerol synthase activity and blocks temperature-dependent activation." evidence="3">
    <original>D</original>
    <variation>Q</variation>
    <location>
        <position position="147"/>
    </location>
</feature>
<feature type="mutagenesis site" description="Significantly reduces the monoglucosyldiacylglycerol synthase activity and blocks temperature-dependent activation." evidence="3">
    <original>D</original>
    <variation>A</variation>
    <location>
        <position position="200"/>
    </location>
</feature>
<feature type="mutagenesis site" description="Significantly reduces the monoglucosyldiacylglycerol synthase activity and blocks temperature-dependent activation." evidence="3">
    <original>R</original>
    <variation>Q</variation>
    <location>
        <position position="329"/>
    </location>
</feature>
<feature type="mutagenesis site" description="Significantly reduces the monoglucosyldiacylglycerol synthase activity and blocks temperature-dependent activation." evidence="3">
    <original>R</original>
    <variation>A</variation>
    <location>
        <position position="331"/>
    </location>
</feature>
<comment type="function">
    <text evidence="2 3">Glucosyltransferase involved in the biosynthesis of the non-bilayer-forming membrane lipid beta-monoglucosyldiacylglycerol which contributes to regulate the properties and stability of the membrane. Catalyzes the transfer of a glucosyl residue from UDP-Glc to diacylglycerol (DAG) acceptor to form the corresponding beta-glucosyl-DAG (1,2-diacyl-3-O-(beta-D-glucopyranosyl)-sn-glycerol). It can only use UDP-Glc as sugar donor. Two types of DAG (dipalmitoyl-DAG (DPDAG) and 1-oleoyl-2-palmitoyl-DAG (OPDAG)) can be used as sugar acceptors, but OPDAG is preferred.</text>
</comment>
<comment type="catalytic activity">
    <reaction evidence="2">
        <text>a 1,2-diacyl-sn-glycerol + UDP-alpha-D-glucose = a 1,2-diacyl-3-O-(beta-D-glucopyranosyl)-sn-glycerol + UDP + H(+)</text>
        <dbReference type="Rhea" id="RHEA:17285"/>
        <dbReference type="ChEBI" id="CHEBI:15378"/>
        <dbReference type="ChEBI" id="CHEBI:17815"/>
        <dbReference type="ChEBI" id="CHEBI:58223"/>
        <dbReference type="ChEBI" id="CHEBI:58885"/>
        <dbReference type="ChEBI" id="CHEBI:75799"/>
        <dbReference type="EC" id="2.4.1.336"/>
    </reaction>
</comment>
<comment type="cofactor">
    <cofactor evidence="2">
        <name>Mg(2+)</name>
        <dbReference type="ChEBI" id="CHEBI:18420"/>
    </cofactor>
</comment>
<comment type="biophysicochemical properties">
    <temperatureDependence>
        <text evidence="3">The activity increases with temperature.</text>
    </temperatureDependence>
</comment>
<comment type="subcellular location">
    <subcellularLocation>
        <location evidence="4">Membrane</location>
        <topology evidence="4">Multi-pass membrane protein</topology>
    </subcellularLocation>
</comment>
<comment type="similarity">
    <text evidence="4">Belongs to the glycosyltransferase 2 family.</text>
</comment>
<organism>
    <name type="scientific">Synechocystis sp. (strain ATCC 27184 / PCC 6803 / Kazusa)</name>
    <dbReference type="NCBI Taxonomy" id="1111708"/>
    <lineage>
        <taxon>Bacteria</taxon>
        <taxon>Bacillati</taxon>
        <taxon>Cyanobacteriota</taxon>
        <taxon>Cyanophyceae</taxon>
        <taxon>Synechococcales</taxon>
        <taxon>Merismopediaceae</taxon>
        <taxon>Synechocystis</taxon>
    </lineage>
</organism>
<keyword id="KW-0119">Carbohydrate metabolism</keyword>
<keyword id="KW-0319">Glycerol metabolism</keyword>
<keyword id="KW-0328">Glycosyltransferase</keyword>
<keyword id="KW-0444">Lipid biosynthesis</keyword>
<keyword id="KW-0443">Lipid metabolism</keyword>
<keyword id="KW-0460">Magnesium</keyword>
<keyword id="KW-0472">Membrane</keyword>
<keyword id="KW-1185">Reference proteome</keyword>
<keyword id="KW-0808">Transferase</keyword>
<keyword id="KW-0812">Transmembrane</keyword>
<keyword id="KW-1133">Transmembrane helix</keyword>
<gene>
    <name type="ordered locus">sll1377</name>
</gene>
<evidence type="ECO:0000255" key="1"/>
<evidence type="ECO:0000269" key="2">
    <source>
    </source>
</evidence>
<evidence type="ECO:0000269" key="3">
    <source>
    </source>
</evidence>
<evidence type="ECO:0000305" key="4"/>
<dbReference type="EC" id="2.4.1.336" evidence="2"/>
<dbReference type="EMBL" id="BA000022">
    <property type="protein sequence ID" value="BAA18254.1"/>
    <property type="molecule type" value="Genomic_DNA"/>
</dbReference>
<dbReference type="PIR" id="S75693">
    <property type="entry name" value="S75693"/>
</dbReference>
<dbReference type="SMR" id="P74165"/>
<dbReference type="FunCoup" id="P74165">
    <property type="interactions" value="172"/>
</dbReference>
<dbReference type="STRING" id="1148.gene:10499130"/>
<dbReference type="CAZy" id="GT2">
    <property type="family name" value="Glycosyltransferase Family 2"/>
</dbReference>
<dbReference type="PaxDb" id="1148-1653339"/>
<dbReference type="EnsemblBacteria" id="BAA18254">
    <property type="protein sequence ID" value="BAA18254"/>
    <property type="gene ID" value="BAA18254"/>
</dbReference>
<dbReference type="KEGG" id="syn:sll1377"/>
<dbReference type="eggNOG" id="COG1215">
    <property type="taxonomic scope" value="Bacteria"/>
</dbReference>
<dbReference type="InParanoid" id="P74165"/>
<dbReference type="PhylomeDB" id="P74165"/>
<dbReference type="BioCyc" id="MetaCyc:MONOMER-19315"/>
<dbReference type="BRENDA" id="2.4.1.336">
    <property type="organism ID" value="382"/>
</dbReference>
<dbReference type="Proteomes" id="UP000001425">
    <property type="component" value="Chromosome"/>
</dbReference>
<dbReference type="GO" id="GO:0005886">
    <property type="term" value="C:plasma membrane"/>
    <property type="evidence" value="ECO:0000318"/>
    <property type="project" value="GO_Central"/>
</dbReference>
<dbReference type="GO" id="GO:0016758">
    <property type="term" value="F:hexosyltransferase activity"/>
    <property type="evidence" value="ECO:0000314"/>
    <property type="project" value="UniProtKB"/>
</dbReference>
<dbReference type="GO" id="GO:0000287">
    <property type="term" value="F:magnesium ion binding"/>
    <property type="evidence" value="ECO:0000314"/>
    <property type="project" value="UniProtKB"/>
</dbReference>
<dbReference type="GO" id="GO:0006071">
    <property type="term" value="P:glycerol metabolic process"/>
    <property type="evidence" value="ECO:0007669"/>
    <property type="project" value="UniProtKB-KW"/>
</dbReference>
<dbReference type="GO" id="GO:0046467">
    <property type="term" value="P:membrane lipid biosynthetic process"/>
    <property type="evidence" value="ECO:0000314"/>
    <property type="project" value="UniProtKB"/>
</dbReference>
<dbReference type="CDD" id="cd06423">
    <property type="entry name" value="CESA_like"/>
    <property type="match status" value="1"/>
</dbReference>
<dbReference type="FunFam" id="3.90.550.10:FF:000164">
    <property type="entry name" value="Beta-(1-3)-glucosyl transferase"/>
    <property type="match status" value="1"/>
</dbReference>
<dbReference type="Gene3D" id="3.90.550.10">
    <property type="entry name" value="Spore Coat Polysaccharide Biosynthesis Protein SpsA, Chain A"/>
    <property type="match status" value="1"/>
</dbReference>
<dbReference type="InterPro" id="IPR050321">
    <property type="entry name" value="Glycosyltr_2/OpgH_subfam"/>
</dbReference>
<dbReference type="InterPro" id="IPR029044">
    <property type="entry name" value="Nucleotide-diphossugar_trans"/>
</dbReference>
<dbReference type="PANTHER" id="PTHR43867">
    <property type="entry name" value="CELLULOSE SYNTHASE CATALYTIC SUBUNIT A [UDP-FORMING]"/>
    <property type="match status" value="1"/>
</dbReference>
<dbReference type="PANTHER" id="PTHR43867:SF2">
    <property type="entry name" value="CELLULOSE SYNTHASE CATALYTIC SUBUNIT A [UDP-FORMING]"/>
    <property type="match status" value="1"/>
</dbReference>
<dbReference type="Pfam" id="PF13641">
    <property type="entry name" value="Glyco_tranf_2_3"/>
    <property type="match status" value="1"/>
</dbReference>
<dbReference type="SUPFAM" id="SSF53448">
    <property type="entry name" value="Nucleotide-diphospho-sugar transferases"/>
    <property type="match status" value="1"/>
</dbReference>
<protein>
    <recommendedName>
        <fullName>Beta-monoglucosyldiacylglycerol synthase</fullName>
        <shortName>Beta-MGS</shortName>
        <shortName>MGlcDAG synthase</shortName>
        <ecNumber evidence="2">2.4.1.336</ecNumber>
    </recommendedName>
    <alternativeName>
        <fullName>UDP-glucose:1,2-diacylglycerol 3-beta-D-glucosyltransferase</fullName>
    </alternativeName>
</protein>
<proteinExistence type="evidence at protein level"/>